<accession>P27673</accession>
<reference key="1">
    <citation type="journal article" date="1991" name="J. Biol. Chem.">
        <title>Structure and developmental expression of troponin I isoforms. cDNA clone analysis of avian cardiac troponin I mRNA.</title>
        <authorList>
            <person name="Hastings K.E."/>
            <person name="Koppe R.I."/>
            <person name="Marmur E."/>
            <person name="Bader D."/>
            <person name="Shimada Y."/>
            <person name="Toyota N."/>
        </authorList>
    </citation>
    <scope>NUCLEOTIDE SEQUENCE [MRNA]</scope>
</reference>
<feature type="chain" id="PRO_0000186156" description="Troponin I, cardiac muscle">
    <location>
        <begin position="1" status="less than"/>
        <end position="168"/>
    </location>
</feature>
<feature type="region of interest" description="Disordered" evidence="1">
    <location>
        <begin position="128"/>
        <end position="168"/>
    </location>
</feature>
<feature type="compositionally biased region" description="Basic and acidic residues" evidence="1">
    <location>
        <begin position="128"/>
        <end position="147"/>
    </location>
</feature>
<feature type="non-terminal residue">
    <location>
        <position position="1"/>
    </location>
</feature>
<name>TNNI3_CHICK</name>
<evidence type="ECO:0000256" key="1">
    <source>
        <dbReference type="SAM" id="MobiDB-lite"/>
    </source>
</evidence>
<evidence type="ECO:0000305" key="2"/>
<proteinExistence type="evidence at transcript level"/>
<dbReference type="EMBL" id="M73703">
    <property type="protein sequence ID" value="AAA49115.1"/>
    <property type="molecule type" value="mRNA"/>
</dbReference>
<dbReference type="SMR" id="P27673"/>
<dbReference type="FunCoup" id="P27673">
    <property type="interactions" value="1"/>
</dbReference>
<dbReference type="VEuPathDB" id="HostDB:geneid_421161"/>
<dbReference type="InParanoid" id="P27673"/>
<dbReference type="PhylomeDB" id="P27673"/>
<dbReference type="Proteomes" id="UP000000539">
    <property type="component" value="Unassembled WGS sequence"/>
</dbReference>
<dbReference type="GO" id="GO:0005861">
    <property type="term" value="C:troponin complex"/>
    <property type="evidence" value="ECO:0000318"/>
    <property type="project" value="GO_Central"/>
</dbReference>
<dbReference type="GO" id="GO:0003779">
    <property type="term" value="F:actin binding"/>
    <property type="evidence" value="ECO:0007669"/>
    <property type="project" value="UniProtKB-KW"/>
</dbReference>
<dbReference type="GO" id="GO:0060048">
    <property type="term" value="P:cardiac muscle contraction"/>
    <property type="evidence" value="ECO:0000318"/>
    <property type="project" value="GO_Central"/>
</dbReference>
<dbReference type="GO" id="GO:0003009">
    <property type="term" value="P:skeletal muscle contraction"/>
    <property type="evidence" value="ECO:0000318"/>
    <property type="project" value="GO_Central"/>
</dbReference>
<dbReference type="Gene3D" id="1.20.5.350">
    <property type="match status" value="1"/>
</dbReference>
<dbReference type="Gene3D" id="6.10.250.180">
    <property type="match status" value="1"/>
</dbReference>
<dbReference type="InterPro" id="IPR001978">
    <property type="entry name" value="Troponin"/>
</dbReference>
<dbReference type="InterPro" id="IPR050875">
    <property type="entry name" value="Troponin_I"/>
</dbReference>
<dbReference type="InterPro" id="IPR038077">
    <property type="entry name" value="Troponin_sf"/>
</dbReference>
<dbReference type="PANTHER" id="PTHR13738">
    <property type="entry name" value="TROPONIN I"/>
    <property type="match status" value="1"/>
</dbReference>
<dbReference type="PANTHER" id="PTHR13738:SF2">
    <property type="entry name" value="TROPONIN I, CARDIAC MUSCLE"/>
    <property type="match status" value="1"/>
</dbReference>
<dbReference type="Pfam" id="PF00992">
    <property type="entry name" value="Troponin"/>
    <property type="match status" value="1"/>
</dbReference>
<dbReference type="SUPFAM" id="SSF90250">
    <property type="entry name" value="Troponin coil-coiled subunits"/>
    <property type="match status" value="1"/>
</dbReference>
<keyword id="KW-0009">Actin-binding</keyword>
<keyword id="KW-0514">Muscle protein</keyword>
<keyword id="KW-1185">Reference proteome</keyword>
<protein>
    <recommendedName>
        <fullName>Troponin I, cardiac muscle</fullName>
    </recommendedName>
    <alternativeName>
        <fullName>Cardiac troponin I</fullName>
    </alternativeName>
</protein>
<gene>
    <name type="primary">TNNI3</name>
</gene>
<comment type="function">
    <text>Troponin I is the inhibitory subunit of troponin, the thin filament regulatory complex which confers calcium-sensitivity to striated muscle actomyosin ATPase activity.</text>
</comment>
<comment type="subunit">
    <text>Binds to actin and tropomyosin.</text>
</comment>
<comment type="similarity">
    <text evidence="2">Belongs to the troponin I family.</text>
</comment>
<organism>
    <name type="scientific">Gallus gallus</name>
    <name type="common">Chicken</name>
    <dbReference type="NCBI Taxonomy" id="9031"/>
    <lineage>
        <taxon>Eukaryota</taxon>
        <taxon>Metazoa</taxon>
        <taxon>Chordata</taxon>
        <taxon>Craniata</taxon>
        <taxon>Vertebrata</taxon>
        <taxon>Euteleostomi</taxon>
        <taxon>Archelosauria</taxon>
        <taxon>Archosauria</taxon>
        <taxon>Dinosauria</taxon>
        <taxon>Saurischia</taxon>
        <taxon>Theropoda</taxon>
        <taxon>Coelurosauria</taxon>
        <taxon>Aves</taxon>
        <taxon>Neognathae</taxon>
        <taxon>Galloanserae</taxon>
        <taxon>Galliformes</taxon>
        <taxon>Phasianidae</taxon>
        <taxon>Phasianinae</taxon>
        <taxon>Gallus</taxon>
    </lineage>
</organism>
<sequence>KLQLKTLLLQRAKRELEREEQERAGEKQRHLGGLCPPPELEGLGVAQLQELCRELHARIAVDEERYDMGTRVSKNMAEMEELRRRVAGGRFVRPALRRVRLSADAMMAALLGSKHRVGTDLRAGLRQVRKDDAEKESREVGDWRKNVDALSGMEGRKKKFEAPGGGQG</sequence>